<name>ENO_VIBC3</name>
<reference key="1">
    <citation type="submission" date="2007-03" db="EMBL/GenBank/DDBJ databases">
        <authorList>
            <person name="Heidelberg J."/>
        </authorList>
    </citation>
    <scope>NUCLEOTIDE SEQUENCE [LARGE SCALE GENOMIC DNA]</scope>
    <source>
        <strain>ATCC 39541 / Classical Ogawa 395 / O395</strain>
    </source>
</reference>
<reference key="2">
    <citation type="journal article" date="2008" name="PLoS ONE">
        <title>A recalibrated molecular clock and independent origins for the cholera pandemic clones.</title>
        <authorList>
            <person name="Feng L."/>
            <person name="Reeves P.R."/>
            <person name="Lan R."/>
            <person name="Ren Y."/>
            <person name="Gao C."/>
            <person name="Zhou Z."/>
            <person name="Ren Y."/>
            <person name="Cheng J."/>
            <person name="Wang W."/>
            <person name="Wang J."/>
            <person name="Qian W."/>
            <person name="Li D."/>
            <person name="Wang L."/>
        </authorList>
    </citation>
    <scope>NUCLEOTIDE SEQUENCE [LARGE SCALE GENOMIC DNA]</scope>
    <source>
        <strain>ATCC 39541 / Classical Ogawa 395 / O395</strain>
    </source>
</reference>
<evidence type="ECO:0000255" key="1">
    <source>
        <dbReference type="HAMAP-Rule" id="MF_00318"/>
    </source>
</evidence>
<organism>
    <name type="scientific">Vibrio cholerae serotype O1 (strain ATCC 39541 / Classical Ogawa 395 / O395)</name>
    <dbReference type="NCBI Taxonomy" id="345073"/>
    <lineage>
        <taxon>Bacteria</taxon>
        <taxon>Pseudomonadati</taxon>
        <taxon>Pseudomonadota</taxon>
        <taxon>Gammaproteobacteria</taxon>
        <taxon>Vibrionales</taxon>
        <taxon>Vibrionaceae</taxon>
        <taxon>Vibrio</taxon>
    </lineage>
</organism>
<gene>
    <name evidence="1" type="primary">eno</name>
    <name type="ordered locus">VC0395_A2025</name>
    <name type="ordered locus">VC395_2562</name>
</gene>
<comment type="function">
    <text evidence="1">Catalyzes the reversible conversion of 2-phosphoglycerate (2-PG) into phosphoenolpyruvate (PEP). It is essential for the degradation of carbohydrates via glycolysis.</text>
</comment>
<comment type="catalytic activity">
    <reaction evidence="1">
        <text>(2R)-2-phosphoglycerate = phosphoenolpyruvate + H2O</text>
        <dbReference type="Rhea" id="RHEA:10164"/>
        <dbReference type="ChEBI" id="CHEBI:15377"/>
        <dbReference type="ChEBI" id="CHEBI:58289"/>
        <dbReference type="ChEBI" id="CHEBI:58702"/>
        <dbReference type="EC" id="4.2.1.11"/>
    </reaction>
</comment>
<comment type="cofactor">
    <cofactor evidence="1">
        <name>Mg(2+)</name>
        <dbReference type="ChEBI" id="CHEBI:18420"/>
    </cofactor>
    <text evidence="1">Binds a second Mg(2+) ion via substrate during catalysis.</text>
</comment>
<comment type="pathway">
    <text evidence="1">Carbohydrate degradation; glycolysis; pyruvate from D-glyceraldehyde 3-phosphate: step 4/5.</text>
</comment>
<comment type="subunit">
    <text evidence="1">Component of the RNA degradosome, a multiprotein complex involved in RNA processing and mRNA degradation.</text>
</comment>
<comment type="subcellular location">
    <subcellularLocation>
        <location evidence="1">Cytoplasm</location>
    </subcellularLocation>
    <subcellularLocation>
        <location evidence="1">Secreted</location>
    </subcellularLocation>
    <subcellularLocation>
        <location evidence="1">Cell surface</location>
    </subcellularLocation>
    <text evidence="1">Fractions of enolase are present in both the cytoplasm and on the cell surface.</text>
</comment>
<comment type="similarity">
    <text evidence="1">Belongs to the enolase family.</text>
</comment>
<keyword id="KW-0963">Cytoplasm</keyword>
<keyword id="KW-0324">Glycolysis</keyword>
<keyword id="KW-0456">Lyase</keyword>
<keyword id="KW-0460">Magnesium</keyword>
<keyword id="KW-0479">Metal-binding</keyword>
<keyword id="KW-0964">Secreted</keyword>
<accession>A5F5I3</accession>
<accession>C3M4T8</accession>
<sequence length="433" mass="45807">MSKIVKVLGREIIDSRGNPTVEAEVHLEGGFVGMAAAPSGASTGSREALELRDGDKSRFLGKGVLKALAAVNGPIADALVGKDAKDQATIDQIMIDLDGTENKSNFGANAILAVSLANAKAAAAAKGMPLYEHIAELNGTPGVFSMPLPMMNIINGGEHADNNVDIQEFMIQPVGAKTLKEAVRMGAEVFHNLAKVLKSKGYNTAVGDEGGFAPNLKSNAEALEVIAEAVAAAGYKLGTDITLAMDCAASEFYDAEKKEYNLKGEGRIFTSNGFSDFLEELTEKFPIVSIEDGLDESDWEGFAYQTEKLGKKIQIVGDDLFVTNTKILKRGIDNGIANSILIKFNQIGSLTETLAAIKMAKDAGYTAVISHRSGETEDATIADLAVGTAAGQIKTGSMSRSDRVAKYNQLIRIEEALGSRAPFNGLKEVKGQA</sequence>
<protein>
    <recommendedName>
        <fullName evidence="1">Enolase</fullName>
        <ecNumber evidence="1">4.2.1.11</ecNumber>
    </recommendedName>
    <alternativeName>
        <fullName evidence="1">2-phospho-D-glycerate hydro-lyase</fullName>
    </alternativeName>
    <alternativeName>
        <fullName evidence="1">2-phosphoglycerate dehydratase</fullName>
    </alternativeName>
</protein>
<feature type="chain" id="PRO_1000072013" description="Enolase">
    <location>
        <begin position="1"/>
        <end position="433"/>
    </location>
</feature>
<feature type="active site" description="Proton donor" evidence="1">
    <location>
        <position position="209"/>
    </location>
</feature>
<feature type="active site" description="Proton acceptor" evidence="1">
    <location>
        <position position="343"/>
    </location>
</feature>
<feature type="binding site" evidence="1">
    <location>
        <position position="167"/>
    </location>
    <ligand>
        <name>(2R)-2-phosphoglycerate</name>
        <dbReference type="ChEBI" id="CHEBI:58289"/>
    </ligand>
</feature>
<feature type="binding site" evidence="1">
    <location>
        <position position="246"/>
    </location>
    <ligand>
        <name>Mg(2+)</name>
        <dbReference type="ChEBI" id="CHEBI:18420"/>
    </ligand>
</feature>
<feature type="binding site" evidence="1">
    <location>
        <position position="291"/>
    </location>
    <ligand>
        <name>Mg(2+)</name>
        <dbReference type="ChEBI" id="CHEBI:18420"/>
    </ligand>
</feature>
<feature type="binding site" evidence="1">
    <location>
        <position position="318"/>
    </location>
    <ligand>
        <name>Mg(2+)</name>
        <dbReference type="ChEBI" id="CHEBI:18420"/>
    </ligand>
</feature>
<feature type="binding site" evidence="1">
    <location>
        <position position="343"/>
    </location>
    <ligand>
        <name>(2R)-2-phosphoglycerate</name>
        <dbReference type="ChEBI" id="CHEBI:58289"/>
    </ligand>
</feature>
<feature type="binding site" evidence="1">
    <location>
        <position position="372"/>
    </location>
    <ligand>
        <name>(2R)-2-phosphoglycerate</name>
        <dbReference type="ChEBI" id="CHEBI:58289"/>
    </ligand>
</feature>
<feature type="binding site" evidence="1">
    <location>
        <position position="373"/>
    </location>
    <ligand>
        <name>(2R)-2-phosphoglycerate</name>
        <dbReference type="ChEBI" id="CHEBI:58289"/>
    </ligand>
</feature>
<feature type="binding site" evidence="1">
    <location>
        <position position="394"/>
    </location>
    <ligand>
        <name>(2R)-2-phosphoglycerate</name>
        <dbReference type="ChEBI" id="CHEBI:58289"/>
    </ligand>
</feature>
<dbReference type="EC" id="4.2.1.11" evidence="1"/>
<dbReference type="EMBL" id="CP000627">
    <property type="protein sequence ID" value="ABQ21450.1"/>
    <property type="molecule type" value="Genomic_DNA"/>
</dbReference>
<dbReference type="EMBL" id="CP001235">
    <property type="protein sequence ID" value="ACP10549.1"/>
    <property type="molecule type" value="Genomic_DNA"/>
</dbReference>
<dbReference type="RefSeq" id="WP_000036741.1">
    <property type="nucleotide sequence ID" value="NZ_JAACZH010000010.1"/>
</dbReference>
<dbReference type="SMR" id="A5F5I3"/>
<dbReference type="GeneID" id="69718946"/>
<dbReference type="KEGG" id="vco:VC0395_A2025"/>
<dbReference type="KEGG" id="vcr:VC395_2562"/>
<dbReference type="PATRIC" id="fig|345073.21.peg.2467"/>
<dbReference type="eggNOG" id="COG0148">
    <property type="taxonomic scope" value="Bacteria"/>
</dbReference>
<dbReference type="HOGENOM" id="CLU_031223_2_1_6"/>
<dbReference type="OrthoDB" id="9804716at2"/>
<dbReference type="UniPathway" id="UPA00109">
    <property type="reaction ID" value="UER00187"/>
</dbReference>
<dbReference type="Proteomes" id="UP000000249">
    <property type="component" value="Chromosome 2"/>
</dbReference>
<dbReference type="GO" id="GO:0009986">
    <property type="term" value="C:cell surface"/>
    <property type="evidence" value="ECO:0007669"/>
    <property type="project" value="UniProtKB-SubCell"/>
</dbReference>
<dbReference type="GO" id="GO:0005576">
    <property type="term" value="C:extracellular region"/>
    <property type="evidence" value="ECO:0007669"/>
    <property type="project" value="UniProtKB-SubCell"/>
</dbReference>
<dbReference type="GO" id="GO:0000015">
    <property type="term" value="C:phosphopyruvate hydratase complex"/>
    <property type="evidence" value="ECO:0007669"/>
    <property type="project" value="InterPro"/>
</dbReference>
<dbReference type="GO" id="GO:0000287">
    <property type="term" value="F:magnesium ion binding"/>
    <property type="evidence" value="ECO:0007669"/>
    <property type="project" value="UniProtKB-UniRule"/>
</dbReference>
<dbReference type="GO" id="GO:0004634">
    <property type="term" value="F:phosphopyruvate hydratase activity"/>
    <property type="evidence" value="ECO:0007669"/>
    <property type="project" value="UniProtKB-UniRule"/>
</dbReference>
<dbReference type="GO" id="GO:0006096">
    <property type="term" value="P:glycolytic process"/>
    <property type="evidence" value="ECO:0007669"/>
    <property type="project" value="UniProtKB-UniRule"/>
</dbReference>
<dbReference type="CDD" id="cd03313">
    <property type="entry name" value="enolase"/>
    <property type="match status" value="1"/>
</dbReference>
<dbReference type="FunFam" id="3.20.20.120:FF:000001">
    <property type="entry name" value="Enolase"/>
    <property type="match status" value="1"/>
</dbReference>
<dbReference type="FunFam" id="3.30.390.10:FF:000001">
    <property type="entry name" value="Enolase"/>
    <property type="match status" value="1"/>
</dbReference>
<dbReference type="Gene3D" id="3.20.20.120">
    <property type="entry name" value="Enolase-like C-terminal domain"/>
    <property type="match status" value="1"/>
</dbReference>
<dbReference type="Gene3D" id="3.30.390.10">
    <property type="entry name" value="Enolase-like, N-terminal domain"/>
    <property type="match status" value="1"/>
</dbReference>
<dbReference type="HAMAP" id="MF_00318">
    <property type="entry name" value="Enolase"/>
    <property type="match status" value="1"/>
</dbReference>
<dbReference type="InterPro" id="IPR000941">
    <property type="entry name" value="Enolase"/>
</dbReference>
<dbReference type="InterPro" id="IPR036849">
    <property type="entry name" value="Enolase-like_C_sf"/>
</dbReference>
<dbReference type="InterPro" id="IPR029017">
    <property type="entry name" value="Enolase-like_N"/>
</dbReference>
<dbReference type="InterPro" id="IPR020810">
    <property type="entry name" value="Enolase_C"/>
</dbReference>
<dbReference type="InterPro" id="IPR020809">
    <property type="entry name" value="Enolase_CS"/>
</dbReference>
<dbReference type="InterPro" id="IPR020811">
    <property type="entry name" value="Enolase_N"/>
</dbReference>
<dbReference type="NCBIfam" id="TIGR01060">
    <property type="entry name" value="eno"/>
    <property type="match status" value="1"/>
</dbReference>
<dbReference type="PANTHER" id="PTHR11902">
    <property type="entry name" value="ENOLASE"/>
    <property type="match status" value="1"/>
</dbReference>
<dbReference type="PANTHER" id="PTHR11902:SF1">
    <property type="entry name" value="ENOLASE"/>
    <property type="match status" value="1"/>
</dbReference>
<dbReference type="Pfam" id="PF00113">
    <property type="entry name" value="Enolase_C"/>
    <property type="match status" value="1"/>
</dbReference>
<dbReference type="Pfam" id="PF03952">
    <property type="entry name" value="Enolase_N"/>
    <property type="match status" value="1"/>
</dbReference>
<dbReference type="PIRSF" id="PIRSF001400">
    <property type="entry name" value="Enolase"/>
    <property type="match status" value="1"/>
</dbReference>
<dbReference type="PRINTS" id="PR00148">
    <property type="entry name" value="ENOLASE"/>
</dbReference>
<dbReference type="SFLD" id="SFLDS00001">
    <property type="entry name" value="Enolase"/>
    <property type="match status" value="1"/>
</dbReference>
<dbReference type="SFLD" id="SFLDF00002">
    <property type="entry name" value="enolase"/>
    <property type="match status" value="1"/>
</dbReference>
<dbReference type="SMART" id="SM01192">
    <property type="entry name" value="Enolase_C"/>
    <property type="match status" value="1"/>
</dbReference>
<dbReference type="SMART" id="SM01193">
    <property type="entry name" value="Enolase_N"/>
    <property type="match status" value="1"/>
</dbReference>
<dbReference type="SUPFAM" id="SSF51604">
    <property type="entry name" value="Enolase C-terminal domain-like"/>
    <property type="match status" value="1"/>
</dbReference>
<dbReference type="SUPFAM" id="SSF54826">
    <property type="entry name" value="Enolase N-terminal domain-like"/>
    <property type="match status" value="1"/>
</dbReference>
<dbReference type="PROSITE" id="PS00164">
    <property type="entry name" value="ENOLASE"/>
    <property type="match status" value="1"/>
</dbReference>
<proteinExistence type="inferred from homology"/>